<accession>Q6Z6K4</accession>
<accession>Q0E2R4</accession>
<reference key="1">
    <citation type="journal article" date="2005" name="Nature">
        <title>The map-based sequence of the rice genome.</title>
        <authorList>
            <consortium name="International rice genome sequencing project (IRGSP)"/>
        </authorList>
    </citation>
    <scope>NUCLEOTIDE SEQUENCE [LARGE SCALE GENOMIC DNA]</scope>
    <source>
        <strain>cv. Nipponbare</strain>
    </source>
</reference>
<reference key="2">
    <citation type="journal article" date="2008" name="Nucleic Acids Res.">
        <title>The rice annotation project database (RAP-DB): 2008 update.</title>
        <authorList>
            <consortium name="The rice annotation project (RAP)"/>
        </authorList>
    </citation>
    <scope>GENOME REANNOTATION</scope>
    <source>
        <strain>cv. Nipponbare</strain>
    </source>
</reference>
<reference key="3">
    <citation type="journal article" date="2013" name="Rice">
        <title>Improvement of the Oryza sativa Nipponbare reference genome using next generation sequence and optical map data.</title>
        <authorList>
            <person name="Kawahara Y."/>
            <person name="de la Bastide M."/>
            <person name="Hamilton J.P."/>
            <person name="Kanamori H."/>
            <person name="McCombie W.R."/>
            <person name="Ouyang S."/>
            <person name="Schwartz D.C."/>
            <person name="Tanaka T."/>
            <person name="Wu J."/>
            <person name="Zhou S."/>
            <person name="Childs K.L."/>
            <person name="Davidson R.M."/>
            <person name="Lin H."/>
            <person name="Quesada-Ocampo L."/>
            <person name="Vaillancourt B."/>
            <person name="Sakai H."/>
            <person name="Lee S.S."/>
            <person name="Kim J."/>
            <person name="Numa H."/>
            <person name="Itoh T."/>
            <person name="Buell C.R."/>
            <person name="Matsumoto T."/>
        </authorList>
    </citation>
    <scope>GENOME REANNOTATION</scope>
    <source>
        <strain>cv. Nipponbare</strain>
    </source>
</reference>
<reference key="4">
    <citation type="journal article" date="2003" name="Science">
        <title>Collection, mapping, and annotation of over 28,000 cDNA clones from japonica rice.</title>
        <authorList>
            <consortium name="The rice full-length cDNA consortium"/>
        </authorList>
    </citation>
    <scope>NUCLEOTIDE SEQUENCE [LARGE SCALE MRNA] OF 230-729</scope>
    <source>
        <strain>cv. Nipponbare</strain>
    </source>
</reference>
<name>BGAL4_ORYSJ</name>
<evidence type="ECO:0000255" key="1"/>
<evidence type="ECO:0000305" key="2"/>
<sequence>MAPAPTPAAAAGRRVAVLAAALVAASLAASVGVANAAVSYDRRSLVINGRRRILLSGSIHYPRSTPEMWPGLIQKAKDGGLDVIQTYVFWNGHEPVQGQYYFSDRYDLVRFVKLVKQAGLYVHLRIGPYVCAEWNFGGFPVWLKYVPGVSFRTDNGPFKAEMQKFVEKIVSMMKSEGLFEWQGGPIIMSQVENEFGPMESVGGSGAKPYANWAAKMAVGTNTGVPWVMCKQDDAPDPVINTCNGFYCDYFSPNKNYKPSMWTEAWTGWFTSFGGGVPHRPVEDLAFAVARFIQKGGSFVNYYMYHGGTNFGRTAGGPFIATSYDYDAPIDEFGLLRQPKWGHLRDLHRAIKQAEPVLVSADPTIESIGSYEKAYVFKAKNGACAAFLSNYHMNTAVKVRFNGQQYNLPAWSISILPDCKTAVFNTATVKEPTLMPKMNPVVRFAWQSYSEDTNSLSDSAFTKDGLVEQLSMTWDKSDYLWYTTYVNIGTNDLRSGQSPQLTVYSAGHSMQVFVNGKSYGSVYGGYDNPKLTYNGRVKMWQGSNKISILSSAVGLPNVGNHFENWNVGVLGPVTLSSLNGGTKDLSHQKWTYQVGLKGETLGLHTVTGSSAVEWGGPGGYQPLTWHKAFFNAPAGNDPVALDMGSMGKGQLWVNGHHVGRYWSYKASGGCGGCSYAGTYHEDKCRSNCGDLSQRWYHVPRSWLKPGGNLLVVLEEYGGDLAGVSLATRTT</sequence>
<comment type="catalytic activity">
    <reaction>
        <text>Hydrolysis of terminal non-reducing beta-D-galactose residues in beta-D-galactosides.</text>
        <dbReference type="EC" id="3.2.1.23"/>
    </reaction>
</comment>
<comment type="subcellular location">
    <subcellularLocation>
        <location evidence="2">Secreted</location>
        <location evidence="2">Extracellular space</location>
        <location evidence="2">Apoplast</location>
    </subcellularLocation>
</comment>
<comment type="similarity">
    <text evidence="2">Belongs to the glycosyl hydrolase 35 family.</text>
</comment>
<comment type="sequence caution" evidence="2">
    <conflict type="erroneous gene model prediction">
        <sequence resource="EMBL-CDS" id="BAF08224"/>
    </conflict>
</comment>
<feature type="signal peptide" evidence="1">
    <location>
        <begin position="1"/>
        <end position="35"/>
    </location>
</feature>
<feature type="chain" id="PRO_0000294156" description="Beta-galactosidase 4">
    <location>
        <begin position="36"/>
        <end position="729"/>
    </location>
</feature>
<feature type="active site" description="Proton donor" evidence="1">
    <location>
        <position position="194"/>
    </location>
</feature>
<feature type="active site" description="Nucleophile" evidence="1">
    <location>
        <position position="263"/>
    </location>
</feature>
<organism>
    <name type="scientific">Oryza sativa subsp. japonica</name>
    <name type="common">Rice</name>
    <dbReference type="NCBI Taxonomy" id="39947"/>
    <lineage>
        <taxon>Eukaryota</taxon>
        <taxon>Viridiplantae</taxon>
        <taxon>Streptophyta</taxon>
        <taxon>Embryophyta</taxon>
        <taxon>Tracheophyta</taxon>
        <taxon>Spermatophyta</taxon>
        <taxon>Magnoliopsida</taxon>
        <taxon>Liliopsida</taxon>
        <taxon>Poales</taxon>
        <taxon>Poaceae</taxon>
        <taxon>BOP clade</taxon>
        <taxon>Oryzoideae</taxon>
        <taxon>Oryzeae</taxon>
        <taxon>Oryzinae</taxon>
        <taxon>Oryza</taxon>
        <taxon>Oryza sativa</taxon>
    </lineage>
</organism>
<protein>
    <recommendedName>
        <fullName>Beta-galactosidase 4</fullName>
        <shortName>Lactase 4</shortName>
        <ecNumber>3.2.1.23</ecNumber>
    </recommendedName>
</protein>
<dbReference type="EC" id="3.2.1.23"/>
<dbReference type="EMBL" id="AP004996">
    <property type="protein sequence ID" value="BAD17189.1"/>
    <property type="molecule type" value="Genomic_DNA"/>
</dbReference>
<dbReference type="EMBL" id="AP008208">
    <property type="protein sequence ID" value="BAF08224.1"/>
    <property type="status" value="ALT_SEQ"/>
    <property type="molecule type" value="Genomic_DNA"/>
</dbReference>
<dbReference type="EMBL" id="AP014958">
    <property type="status" value="NOT_ANNOTATED_CDS"/>
    <property type="molecule type" value="Genomic_DNA"/>
</dbReference>
<dbReference type="EMBL" id="AK059059">
    <property type="status" value="NOT_ANNOTATED_CDS"/>
    <property type="molecule type" value="mRNA"/>
</dbReference>
<dbReference type="RefSeq" id="XP_015627101.1">
    <property type="nucleotide sequence ID" value="XM_015771615.1"/>
</dbReference>
<dbReference type="SMR" id="Q6Z6K4"/>
<dbReference type="FunCoup" id="Q6Z6K4">
    <property type="interactions" value="1"/>
</dbReference>
<dbReference type="STRING" id="39947.Q6Z6K4"/>
<dbReference type="CAZy" id="GH35">
    <property type="family name" value="Glycoside Hydrolase Family 35"/>
</dbReference>
<dbReference type="PaxDb" id="39947-Q6Z6K4"/>
<dbReference type="KEGG" id="dosa:Os02g0219200"/>
<dbReference type="eggNOG" id="KOG0496">
    <property type="taxonomic scope" value="Eukaryota"/>
</dbReference>
<dbReference type="InParanoid" id="Q6Z6K4"/>
<dbReference type="OrthoDB" id="1657402at2759"/>
<dbReference type="Proteomes" id="UP000000763">
    <property type="component" value="Chromosome 2"/>
</dbReference>
<dbReference type="Proteomes" id="UP000059680">
    <property type="component" value="Chromosome 2"/>
</dbReference>
<dbReference type="GO" id="GO:0048046">
    <property type="term" value="C:apoplast"/>
    <property type="evidence" value="ECO:0007669"/>
    <property type="project" value="UniProtKB-SubCell"/>
</dbReference>
<dbReference type="GO" id="GO:0009505">
    <property type="term" value="C:plant-type cell wall"/>
    <property type="evidence" value="ECO:0000318"/>
    <property type="project" value="GO_Central"/>
</dbReference>
<dbReference type="GO" id="GO:0005773">
    <property type="term" value="C:vacuole"/>
    <property type="evidence" value="ECO:0000318"/>
    <property type="project" value="GO_Central"/>
</dbReference>
<dbReference type="GO" id="GO:0004565">
    <property type="term" value="F:beta-galactosidase activity"/>
    <property type="evidence" value="ECO:0000318"/>
    <property type="project" value="GO_Central"/>
</dbReference>
<dbReference type="GO" id="GO:0019388">
    <property type="term" value="P:galactose catabolic process"/>
    <property type="evidence" value="ECO:0000318"/>
    <property type="project" value="GO_Central"/>
</dbReference>
<dbReference type="GO" id="GO:0009827">
    <property type="term" value="P:plant-type cell wall modification"/>
    <property type="evidence" value="ECO:0000318"/>
    <property type="project" value="GO_Central"/>
</dbReference>
<dbReference type="FunFam" id="2.60.120.260:FF:000061">
    <property type="entry name" value="Beta-galactosidase"/>
    <property type="match status" value="1"/>
</dbReference>
<dbReference type="FunFam" id="2.60.120.260:FF:000076">
    <property type="entry name" value="Beta-galactosidase"/>
    <property type="match status" value="1"/>
</dbReference>
<dbReference type="FunFam" id="2.60.120.260:FF:000142">
    <property type="entry name" value="Beta-galactosidase"/>
    <property type="match status" value="1"/>
</dbReference>
<dbReference type="FunFam" id="3.20.20.80:FF:000021">
    <property type="entry name" value="Beta-galactosidase"/>
    <property type="match status" value="1"/>
</dbReference>
<dbReference type="Gene3D" id="2.60.120.260">
    <property type="entry name" value="Galactose-binding domain-like"/>
    <property type="match status" value="2"/>
</dbReference>
<dbReference type="Gene3D" id="3.20.20.80">
    <property type="entry name" value="Glycosidases"/>
    <property type="match status" value="1"/>
</dbReference>
<dbReference type="InterPro" id="IPR048913">
    <property type="entry name" value="BetaGal_gal-bd"/>
</dbReference>
<dbReference type="InterPro" id="IPR008979">
    <property type="entry name" value="Galactose-bd-like_sf"/>
</dbReference>
<dbReference type="InterPro" id="IPR041392">
    <property type="entry name" value="GHD"/>
</dbReference>
<dbReference type="InterPro" id="IPR031330">
    <property type="entry name" value="Gly_Hdrlase_35_cat"/>
</dbReference>
<dbReference type="InterPro" id="IPR019801">
    <property type="entry name" value="Glyco_hydro_35_CS"/>
</dbReference>
<dbReference type="InterPro" id="IPR001944">
    <property type="entry name" value="Glycoside_Hdrlase_35"/>
</dbReference>
<dbReference type="InterPro" id="IPR017853">
    <property type="entry name" value="Glycoside_hydrolase_SF"/>
</dbReference>
<dbReference type="PANTHER" id="PTHR23421">
    <property type="entry name" value="BETA-GALACTOSIDASE RELATED"/>
    <property type="match status" value="1"/>
</dbReference>
<dbReference type="Pfam" id="PF21467">
    <property type="entry name" value="BetaGal_gal-bd"/>
    <property type="match status" value="2"/>
</dbReference>
<dbReference type="Pfam" id="PF17834">
    <property type="entry name" value="GHD"/>
    <property type="match status" value="1"/>
</dbReference>
<dbReference type="Pfam" id="PF01301">
    <property type="entry name" value="Glyco_hydro_35"/>
    <property type="match status" value="1"/>
</dbReference>
<dbReference type="PRINTS" id="PR00742">
    <property type="entry name" value="GLHYDRLASE35"/>
</dbReference>
<dbReference type="SUPFAM" id="SSF51445">
    <property type="entry name" value="(Trans)glycosidases"/>
    <property type="match status" value="1"/>
</dbReference>
<dbReference type="SUPFAM" id="SSF49785">
    <property type="entry name" value="Galactose-binding domain-like"/>
    <property type="match status" value="2"/>
</dbReference>
<dbReference type="PROSITE" id="PS01182">
    <property type="entry name" value="GLYCOSYL_HYDROL_F35"/>
    <property type="match status" value="1"/>
</dbReference>
<gene>
    <name type="ordered locus">Os02g0219200</name>
    <name type="ordered locus">LOC_Os02g12730</name>
    <name type="ORF">P0027A02.24</name>
</gene>
<keyword id="KW-0052">Apoplast</keyword>
<keyword id="KW-0326">Glycosidase</keyword>
<keyword id="KW-0378">Hydrolase</keyword>
<keyword id="KW-1185">Reference proteome</keyword>
<keyword id="KW-0964">Secreted</keyword>
<keyword id="KW-0732">Signal</keyword>
<proteinExistence type="evidence at transcript level"/>